<comment type="function">
    <text evidence="1 2">ATPase required for the post-translational delivery of tail-anchored (TA) proteins to the endoplasmic reticulum. Recognizes and selectively binds the transmembrane domain of TA proteins in the cytosol. This complex then targets to the endoplasmic reticulum by membrane-bound receptors, where the tail-anchored protein is released for insertion. This process is regulated by ATP binding and hydrolysis (PubMed:28382961). ATP binding drives the homodimer towards the closed dimer state, facilitating recognition of newly synthesized TA membrane proteins. ATP hydrolysis is required for insertion. Subsequently, the homodimer reverts towards the open dimer state, lowering its affinity for the membrane-bound receptor, and returning it to the cytosol to initiate a new round of targeting (By similarity).</text>
</comment>
<comment type="subunit">
    <text evidence="1 2">Homodimer (PubMed:28382961). Interacts with SEC61B (PubMed:28382961).</text>
</comment>
<comment type="subcellular location">
    <subcellularLocation>
        <location evidence="2">Cytoplasm</location>
        <location evidence="2">Cytosol</location>
    </subcellularLocation>
    <subcellularLocation>
        <location evidence="1">Cytoplasm</location>
    </subcellularLocation>
    <subcellularLocation>
        <location evidence="1">Endoplasmic reticulum</location>
    </subcellularLocation>
</comment>
<comment type="similarity">
    <text evidence="1">Belongs to the arsA ATPase family.</text>
</comment>
<comment type="sequence caution" evidence="4">
    <conflict type="erroneous gene model prediction">
        <sequence resource="EMBL-CDS" id="EDP03358"/>
    </conflict>
</comment>
<proteinExistence type="evidence at protein level"/>
<organism>
    <name type="scientific">Chlamydomonas reinhardtii</name>
    <name type="common">Chlamydomonas smithii</name>
    <dbReference type="NCBI Taxonomy" id="3055"/>
    <lineage>
        <taxon>Eukaryota</taxon>
        <taxon>Viridiplantae</taxon>
        <taxon>Chlorophyta</taxon>
        <taxon>core chlorophytes</taxon>
        <taxon>Chlorophyceae</taxon>
        <taxon>CS clade</taxon>
        <taxon>Chlamydomonadales</taxon>
        <taxon>Chlamydomonadaceae</taxon>
        <taxon>Chlamydomonas</taxon>
    </lineage>
</organism>
<protein>
    <recommendedName>
        <fullName evidence="1">ATPase ARSA2</fullName>
        <shortName evidence="3">Cr-ArsA2</shortName>
        <ecNumber evidence="1">3.6.-.-</ecNumber>
    </recommendedName>
    <alternativeName>
        <fullName evidence="1">Arsenical pump-driving ATPase 2</fullName>
    </alternativeName>
    <alternativeName>
        <fullName evidence="1">Arsenite-stimulated ATPase 2</fullName>
    </alternativeName>
</protein>
<name>ASNA2_CHLRE</name>
<dbReference type="EC" id="3.6.-.-" evidence="1"/>
<dbReference type="EMBL" id="DS496126">
    <property type="protein sequence ID" value="EDP03358.1"/>
    <property type="status" value="ALT_SEQ"/>
    <property type="molecule type" value="Genomic_DNA"/>
</dbReference>
<dbReference type="SMR" id="A8IXB8"/>
<dbReference type="TCDB" id="3.A.19.1.5">
    <property type="family name" value="the guided entry of tail anchored protein (get) family"/>
</dbReference>
<dbReference type="EnsemblPlants" id="PNW85801">
    <property type="protein sequence ID" value="PNW85801"/>
    <property type="gene ID" value="CHLRE_03g204800v5"/>
</dbReference>
<dbReference type="Gramene" id="PNW85801">
    <property type="protein sequence ID" value="PNW85801"/>
    <property type="gene ID" value="CHLRE_03g204800v5"/>
</dbReference>
<dbReference type="HOGENOM" id="CLU_040761_0_0_1"/>
<dbReference type="OMA" id="MDAPYEF"/>
<dbReference type="OrthoDB" id="1770at2759"/>
<dbReference type="GO" id="GO:0005829">
    <property type="term" value="C:cytosol"/>
    <property type="evidence" value="ECO:0000314"/>
    <property type="project" value="UniProtKB"/>
</dbReference>
<dbReference type="GO" id="GO:0005783">
    <property type="term" value="C:endoplasmic reticulum"/>
    <property type="evidence" value="ECO:0007669"/>
    <property type="project" value="UniProtKB-SubCell"/>
</dbReference>
<dbReference type="GO" id="GO:0005524">
    <property type="term" value="F:ATP binding"/>
    <property type="evidence" value="ECO:0007669"/>
    <property type="project" value="UniProtKB-UniRule"/>
</dbReference>
<dbReference type="GO" id="GO:0016887">
    <property type="term" value="F:ATP hydrolysis activity"/>
    <property type="evidence" value="ECO:0007669"/>
    <property type="project" value="InterPro"/>
</dbReference>
<dbReference type="GO" id="GO:0071816">
    <property type="term" value="P:tail-anchored membrane protein insertion into ER membrane"/>
    <property type="evidence" value="ECO:0000314"/>
    <property type="project" value="UniProtKB"/>
</dbReference>
<dbReference type="CDD" id="cd02035">
    <property type="entry name" value="ArsA"/>
    <property type="match status" value="1"/>
</dbReference>
<dbReference type="FunFam" id="3.40.50.300:FF:000235">
    <property type="entry name" value="ATPase ASNA1"/>
    <property type="match status" value="1"/>
</dbReference>
<dbReference type="Gene3D" id="3.40.50.300">
    <property type="entry name" value="P-loop containing nucleotide triphosphate hydrolases"/>
    <property type="match status" value="1"/>
</dbReference>
<dbReference type="HAMAP" id="MF_03112">
    <property type="entry name" value="Asna1_Get3"/>
    <property type="match status" value="1"/>
</dbReference>
<dbReference type="InterPro" id="IPR025723">
    <property type="entry name" value="Anion-transp_ATPase-like_dom"/>
</dbReference>
<dbReference type="InterPro" id="IPR016300">
    <property type="entry name" value="ATPase_ArsA/GET3"/>
</dbReference>
<dbReference type="InterPro" id="IPR027542">
    <property type="entry name" value="ATPase_ArsA/GET3_euk"/>
</dbReference>
<dbReference type="InterPro" id="IPR027417">
    <property type="entry name" value="P-loop_NTPase"/>
</dbReference>
<dbReference type="NCBIfam" id="TIGR00345">
    <property type="entry name" value="GET3_arsA_TRC40"/>
    <property type="match status" value="1"/>
</dbReference>
<dbReference type="PANTHER" id="PTHR10803">
    <property type="entry name" value="ARSENICAL PUMP-DRIVING ATPASE ARSENITE-TRANSLOCATING ATPASE"/>
    <property type="match status" value="1"/>
</dbReference>
<dbReference type="PANTHER" id="PTHR10803:SF3">
    <property type="entry name" value="ATPASE GET3"/>
    <property type="match status" value="1"/>
</dbReference>
<dbReference type="Pfam" id="PF02374">
    <property type="entry name" value="ArsA_ATPase"/>
    <property type="match status" value="1"/>
</dbReference>
<dbReference type="SUPFAM" id="SSF52540">
    <property type="entry name" value="P-loop containing nucleoside triphosphate hydrolases"/>
    <property type="match status" value="1"/>
</dbReference>
<keyword id="KW-0067">ATP-binding</keyword>
<keyword id="KW-0963">Cytoplasm</keyword>
<keyword id="KW-0256">Endoplasmic reticulum</keyword>
<keyword id="KW-0378">Hydrolase</keyword>
<keyword id="KW-0547">Nucleotide-binding</keyword>
<keyword id="KW-0813">Transport</keyword>
<sequence>MAADMPDPTLQNVVDQKELKWIFVGGKGGVGKTTTSSSLAVALAESGTRNRVLIISTDPAHNLSDAFRQKFTKTPTLVNGFTNLFAMEVDPQPDIGEMEQLEWAQDSFLTELAGSIPGIDEAMSFAEVMKQVQTMDYDTIVFDTAPTGHTLRLLNFPTILEKGLSKLVALKGAMGGMMGQVTRMLGGMAGGGEGAADLPDQLLGKVEGMLDVVRKVSAQFKDPLLTTFVAVCIPEFLSLYETERLVQELAKFEIDCRNIVINQIIFPESVGGSRLLDARVRMQQKYLDQFYELYEDFHILQLPLLEEEVRGPEALKAFAVNLLKPYVPAPPTDAAARQAALVSEVAALKKRVAELEAALAKK</sequence>
<feature type="chain" id="PRO_0000442531" description="ATPase ARSA2">
    <location>
        <begin position="1"/>
        <end position="362"/>
    </location>
</feature>
<feature type="active site" evidence="1">
    <location>
        <position position="58"/>
    </location>
</feature>
<feature type="binding site" evidence="1">
    <location>
        <begin position="27"/>
        <end position="34"/>
    </location>
    <ligand>
        <name>ATP</name>
        <dbReference type="ChEBI" id="CHEBI:30616"/>
    </ligand>
</feature>
<feature type="binding site" evidence="1">
    <location>
        <position position="235"/>
    </location>
    <ligand>
        <name>ATP</name>
        <dbReference type="ChEBI" id="CHEBI:30616"/>
    </ligand>
</feature>
<feature type="binding site" evidence="1">
    <location>
        <position position="262"/>
    </location>
    <ligand>
        <name>ATP</name>
        <dbReference type="ChEBI" id="CHEBI:30616"/>
    </ligand>
</feature>
<gene>
    <name evidence="3" type="primary">ARSA2</name>
    <name evidence="5" type="ORF">CHLREDRAFT_102612</name>
</gene>
<evidence type="ECO:0000255" key="1">
    <source>
        <dbReference type="HAMAP-Rule" id="MF_03112"/>
    </source>
</evidence>
<evidence type="ECO:0000269" key="2">
    <source>
    </source>
</evidence>
<evidence type="ECO:0000303" key="3">
    <source>
    </source>
</evidence>
<evidence type="ECO:0000305" key="4"/>
<evidence type="ECO:0000312" key="5">
    <source>
        <dbReference type="EMBL" id="EDP03358.1"/>
    </source>
</evidence>
<accession>A8IXB8</accession>
<reference key="1">
    <citation type="journal article" date="2007" name="Science">
        <title>The Chlamydomonas genome reveals the evolution of key animal and plant functions.</title>
        <authorList>
            <person name="Merchant S.S."/>
            <person name="Prochnik S.E."/>
            <person name="Vallon O."/>
            <person name="Harris E.H."/>
            <person name="Karpowicz S.J."/>
            <person name="Witman G.B."/>
            <person name="Terry A."/>
            <person name="Salamov A."/>
            <person name="Fritz-Laylin L.K."/>
            <person name="Marechal-Drouard L."/>
            <person name="Marshall W.F."/>
            <person name="Qu L.H."/>
            <person name="Nelson D.R."/>
            <person name="Sanderfoot A.A."/>
            <person name="Spalding M.H."/>
            <person name="Kapitonov V.V."/>
            <person name="Ren Q."/>
            <person name="Ferris P."/>
            <person name="Lindquist E."/>
            <person name="Shapiro H."/>
            <person name="Lucas S.M."/>
            <person name="Grimwood J."/>
            <person name="Schmutz J."/>
            <person name="Cardol P."/>
            <person name="Cerutti H."/>
            <person name="Chanfreau G."/>
            <person name="Chen C.L."/>
            <person name="Cognat V."/>
            <person name="Croft M.T."/>
            <person name="Dent R."/>
            <person name="Dutcher S."/>
            <person name="Fernandez E."/>
            <person name="Fukuzawa H."/>
            <person name="Gonzalez-Ballester D."/>
            <person name="Gonzalez-Halphen D."/>
            <person name="Hallmann A."/>
            <person name="Hanikenne M."/>
            <person name="Hippler M."/>
            <person name="Inwood W."/>
            <person name="Jabbari K."/>
            <person name="Kalanon M."/>
            <person name="Kuras R."/>
            <person name="Lefebvre P.A."/>
            <person name="Lemaire S.D."/>
            <person name="Lobanov A.V."/>
            <person name="Lohr M."/>
            <person name="Manuell A."/>
            <person name="Meier I."/>
            <person name="Mets L."/>
            <person name="Mittag M."/>
            <person name="Mittelmeier T."/>
            <person name="Moroney J.V."/>
            <person name="Moseley J."/>
            <person name="Napoli C."/>
            <person name="Nedelcu A.M."/>
            <person name="Niyogi K."/>
            <person name="Novoselov S.V."/>
            <person name="Paulsen I.T."/>
            <person name="Pazour G.J."/>
            <person name="Purton S."/>
            <person name="Ral J.P."/>
            <person name="Riano-Pachon D.M."/>
            <person name="Riekhof W."/>
            <person name="Rymarquis L."/>
            <person name="Schroda M."/>
            <person name="Stern D."/>
            <person name="Umen J."/>
            <person name="Willows R."/>
            <person name="Wilson N."/>
            <person name="Zimmer S.L."/>
            <person name="Allmer J."/>
            <person name="Balk J."/>
            <person name="Bisova K."/>
            <person name="Chen C.J."/>
            <person name="Elias M."/>
            <person name="Gendler K."/>
            <person name="Hauser C."/>
            <person name="Lamb M.R."/>
            <person name="Ledford H."/>
            <person name="Long J.C."/>
            <person name="Minagawa J."/>
            <person name="Page M.D."/>
            <person name="Pan J."/>
            <person name="Pootakham W."/>
            <person name="Roje S."/>
            <person name="Rose A."/>
            <person name="Stahlberg E."/>
            <person name="Terauchi A.M."/>
            <person name="Yang P."/>
            <person name="Ball S."/>
            <person name="Bowler C."/>
            <person name="Dieckmann C.L."/>
            <person name="Gladyshev V.N."/>
            <person name="Green P."/>
            <person name="Jorgensen R."/>
            <person name="Mayfield S."/>
            <person name="Mueller-Roeber B."/>
            <person name="Rajamani S."/>
            <person name="Sayre R.T."/>
            <person name="Brokstein P."/>
            <person name="Dubchak I."/>
            <person name="Goodstein D."/>
            <person name="Hornick L."/>
            <person name="Huang Y.W."/>
            <person name="Jhaveri J."/>
            <person name="Luo Y."/>
            <person name="Martinez D."/>
            <person name="Ngau W.C."/>
            <person name="Otillar B."/>
            <person name="Poliakov A."/>
            <person name="Porter A."/>
            <person name="Szajkowski L."/>
            <person name="Werner G."/>
            <person name="Zhou K."/>
            <person name="Grigoriev I.V."/>
            <person name="Rokhsar D.S."/>
            <person name="Grossman A.R."/>
        </authorList>
    </citation>
    <scope>NUCLEOTIDE SEQUENCE [LARGE SCALE GENOMIC DNA]</scope>
    <source>
        <strain>CC-503</strain>
    </source>
</reference>
<reference key="2">
    <citation type="journal article" date="2017" name="Sci. Rep.">
        <title>In search of tail-anchored protein machinery in plants: reevaluating the role of arsenite transporters.</title>
        <authorList>
            <person name="Maestre-Reyna M."/>
            <person name="Wu S.M."/>
            <person name="Chang Y.C."/>
            <person name="Chen C.C."/>
            <person name="Maestre-Reyna A."/>
            <person name="Wang A.H."/>
            <person name="Chang H.Y."/>
        </authorList>
    </citation>
    <scope>FUNCTION</scope>
    <scope>SUBUNIT</scope>
    <scope>INTERACTION WITH SEC61B</scope>
    <scope>SUBCELLULAR LOCATION</scope>
</reference>